<accession>A8KZF0</accession>
<keyword id="KW-0315">Glutamine amidotransferase</keyword>
<keyword id="KW-0378">Hydrolase</keyword>
<keyword id="KW-0456">Lyase</keyword>
<keyword id="KW-0663">Pyridoxal phosphate</keyword>
<sequence>MSAPRIGVLALQGDVREHVRALREAGADAGEVRRAGELAELDGLVLPGGESTTIGRLLRVFDLLEPLRAAVAGGLPVFGSCAGMILLAQDVIDGRPGQPLIGGLDVVVRRNAFGRQVESFETDLVVDGVDGPAVHAVFIRAPWVEKAGDGVEVLARVADRPVAVRQGPLLATSFHPELTGDIRVHRLFVEIVRSELGLKRGRS</sequence>
<reference key="1">
    <citation type="journal article" date="2007" name="Genome Res.">
        <title>Genome characteristics of facultatively symbiotic Frankia sp. strains reflect host range and host plant biogeography.</title>
        <authorList>
            <person name="Normand P."/>
            <person name="Lapierre P."/>
            <person name="Tisa L.S."/>
            <person name="Gogarten J.P."/>
            <person name="Alloisio N."/>
            <person name="Bagnarol E."/>
            <person name="Bassi C.A."/>
            <person name="Berry A.M."/>
            <person name="Bickhart D.M."/>
            <person name="Choisne N."/>
            <person name="Couloux A."/>
            <person name="Cournoyer B."/>
            <person name="Cruveiller S."/>
            <person name="Daubin V."/>
            <person name="Demange N."/>
            <person name="Francino M.P."/>
            <person name="Goltsman E."/>
            <person name="Huang Y."/>
            <person name="Kopp O.R."/>
            <person name="Labarre L."/>
            <person name="Lapidus A."/>
            <person name="Lavire C."/>
            <person name="Marechal J."/>
            <person name="Martinez M."/>
            <person name="Mastronunzio J.E."/>
            <person name="Mullin B.C."/>
            <person name="Niemann J."/>
            <person name="Pujic P."/>
            <person name="Rawnsley T."/>
            <person name="Rouy Z."/>
            <person name="Schenowitz C."/>
            <person name="Sellstedt A."/>
            <person name="Tavares F."/>
            <person name="Tomkins J.P."/>
            <person name="Vallenet D."/>
            <person name="Valverde C."/>
            <person name="Wall L.G."/>
            <person name="Wang Y."/>
            <person name="Medigue C."/>
            <person name="Benson D.R."/>
        </authorList>
    </citation>
    <scope>NUCLEOTIDE SEQUENCE [LARGE SCALE GENOMIC DNA]</scope>
    <source>
        <strain>EAN1pec</strain>
    </source>
</reference>
<dbReference type="EC" id="4.3.3.6" evidence="1"/>
<dbReference type="EC" id="3.5.1.2" evidence="1"/>
<dbReference type="EMBL" id="CP000820">
    <property type="protein sequence ID" value="ABW14506.1"/>
    <property type="molecule type" value="Genomic_DNA"/>
</dbReference>
<dbReference type="RefSeq" id="WP_020462621.1">
    <property type="nucleotide sequence ID" value="NC_009921.1"/>
</dbReference>
<dbReference type="SMR" id="A8KZF0"/>
<dbReference type="STRING" id="298653.Franean1_5148"/>
<dbReference type="KEGG" id="fre:Franean1_5148"/>
<dbReference type="eggNOG" id="COG0311">
    <property type="taxonomic scope" value="Bacteria"/>
</dbReference>
<dbReference type="HOGENOM" id="CLU_069674_2_0_11"/>
<dbReference type="UniPathway" id="UPA00245"/>
<dbReference type="GO" id="GO:0005829">
    <property type="term" value="C:cytosol"/>
    <property type="evidence" value="ECO:0007669"/>
    <property type="project" value="TreeGrafter"/>
</dbReference>
<dbReference type="GO" id="GO:1903600">
    <property type="term" value="C:glutaminase complex"/>
    <property type="evidence" value="ECO:0007669"/>
    <property type="project" value="TreeGrafter"/>
</dbReference>
<dbReference type="GO" id="GO:0004359">
    <property type="term" value="F:glutaminase activity"/>
    <property type="evidence" value="ECO:0007669"/>
    <property type="project" value="UniProtKB-UniRule"/>
</dbReference>
<dbReference type="GO" id="GO:0036381">
    <property type="term" value="F:pyridoxal 5'-phosphate synthase (glutamine hydrolysing) activity"/>
    <property type="evidence" value="ECO:0007669"/>
    <property type="project" value="UniProtKB-UniRule"/>
</dbReference>
<dbReference type="GO" id="GO:0006543">
    <property type="term" value="P:glutamine catabolic process"/>
    <property type="evidence" value="ECO:0007669"/>
    <property type="project" value="UniProtKB-UniRule"/>
</dbReference>
<dbReference type="GO" id="GO:0042823">
    <property type="term" value="P:pyridoxal phosphate biosynthetic process"/>
    <property type="evidence" value="ECO:0007669"/>
    <property type="project" value="UniProtKB-UniRule"/>
</dbReference>
<dbReference type="GO" id="GO:0008614">
    <property type="term" value="P:pyridoxine metabolic process"/>
    <property type="evidence" value="ECO:0007669"/>
    <property type="project" value="TreeGrafter"/>
</dbReference>
<dbReference type="CDD" id="cd01749">
    <property type="entry name" value="GATase1_PB"/>
    <property type="match status" value="1"/>
</dbReference>
<dbReference type="FunFam" id="3.40.50.880:FF:000010">
    <property type="entry name" value="uncharacterized protein LOC100176842 isoform X2"/>
    <property type="match status" value="1"/>
</dbReference>
<dbReference type="Gene3D" id="3.40.50.880">
    <property type="match status" value="1"/>
</dbReference>
<dbReference type="HAMAP" id="MF_01615">
    <property type="entry name" value="PdxT"/>
    <property type="match status" value="1"/>
</dbReference>
<dbReference type="InterPro" id="IPR029062">
    <property type="entry name" value="Class_I_gatase-like"/>
</dbReference>
<dbReference type="InterPro" id="IPR002161">
    <property type="entry name" value="PdxT/SNO"/>
</dbReference>
<dbReference type="InterPro" id="IPR021196">
    <property type="entry name" value="PdxT/SNO_CS"/>
</dbReference>
<dbReference type="NCBIfam" id="TIGR03800">
    <property type="entry name" value="PLP_synth_Pdx2"/>
    <property type="match status" value="1"/>
</dbReference>
<dbReference type="PANTHER" id="PTHR31559">
    <property type="entry name" value="PYRIDOXAL 5'-PHOSPHATE SYNTHASE SUBUNIT SNO"/>
    <property type="match status" value="1"/>
</dbReference>
<dbReference type="PANTHER" id="PTHR31559:SF0">
    <property type="entry name" value="PYRIDOXAL 5'-PHOSPHATE SYNTHASE SUBUNIT SNO1-RELATED"/>
    <property type="match status" value="1"/>
</dbReference>
<dbReference type="Pfam" id="PF01174">
    <property type="entry name" value="SNO"/>
    <property type="match status" value="1"/>
</dbReference>
<dbReference type="PIRSF" id="PIRSF005639">
    <property type="entry name" value="Glut_amidoT_SNO"/>
    <property type="match status" value="1"/>
</dbReference>
<dbReference type="SUPFAM" id="SSF52317">
    <property type="entry name" value="Class I glutamine amidotransferase-like"/>
    <property type="match status" value="1"/>
</dbReference>
<dbReference type="PROSITE" id="PS01236">
    <property type="entry name" value="PDXT_SNO_1"/>
    <property type="match status" value="1"/>
</dbReference>
<dbReference type="PROSITE" id="PS51130">
    <property type="entry name" value="PDXT_SNO_2"/>
    <property type="match status" value="1"/>
</dbReference>
<proteinExistence type="inferred from homology"/>
<protein>
    <recommendedName>
        <fullName evidence="1">Pyridoxal 5'-phosphate synthase subunit PdxT</fullName>
        <ecNumber evidence="1">4.3.3.6</ecNumber>
    </recommendedName>
    <alternativeName>
        <fullName evidence="1">Pdx2</fullName>
    </alternativeName>
    <alternativeName>
        <fullName evidence="1">Pyridoxal 5'-phosphate synthase glutaminase subunit</fullName>
        <ecNumber evidence="1">3.5.1.2</ecNumber>
    </alternativeName>
</protein>
<name>PDXT_PARS2</name>
<comment type="function">
    <text evidence="1">Catalyzes the hydrolysis of glutamine to glutamate and ammonia as part of the biosynthesis of pyridoxal 5'-phosphate. The resulting ammonia molecule is channeled to the active site of PdxS.</text>
</comment>
<comment type="catalytic activity">
    <reaction evidence="1">
        <text>aldehydo-D-ribose 5-phosphate + D-glyceraldehyde 3-phosphate + L-glutamine = pyridoxal 5'-phosphate + L-glutamate + phosphate + 3 H2O + H(+)</text>
        <dbReference type="Rhea" id="RHEA:31507"/>
        <dbReference type="ChEBI" id="CHEBI:15377"/>
        <dbReference type="ChEBI" id="CHEBI:15378"/>
        <dbReference type="ChEBI" id="CHEBI:29985"/>
        <dbReference type="ChEBI" id="CHEBI:43474"/>
        <dbReference type="ChEBI" id="CHEBI:58273"/>
        <dbReference type="ChEBI" id="CHEBI:58359"/>
        <dbReference type="ChEBI" id="CHEBI:59776"/>
        <dbReference type="ChEBI" id="CHEBI:597326"/>
        <dbReference type="EC" id="4.3.3.6"/>
    </reaction>
</comment>
<comment type="catalytic activity">
    <reaction evidence="1">
        <text>L-glutamine + H2O = L-glutamate + NH4(+)</text>
        <dbReference type="Rhea" id="RHEA:15889"/>
        <dbReference type="ChEBI" id="CHEBI:15377"/>
        <dbReference type="ChEBI" id="CHEBI:28938"/>
        <dbReference type="ChEBI" id="CHEBI:29985"/>
        <dbReference type="ChEBI" id="CHEBI:58359"/>
        <dbReference type="EC" id="3.5.1.2"/>
    </reaction>
</comment>
<comment type="pathway">
    <text evidence="1">Cofactor biosynthesis; pyridoxal 5'-phosphate biosynthesis.</text>
</comment>
<comment type="subunit">
    <text evidence="1">In the presence of PdxS, forms a dodecamer of heterodimers. Only shows activity in the heterodimer.</text>
</comment>
<comment type="similarity">
    <text evidence="1">Belongs to the glutaminase PdxT/SNO family.</text>
</comment>
<evidence type="ECO:0000255" key="1">
    <source>
        <dbReference type="HAMAP-Rule" id="MF_01615"/>
    </source>
</evidence>
<gene>
    <name evidence="1" type="primary">pdxT</name>
    <name type="ordered locus">Franean1_5148</name>
</gene>
<organism>
    <name type="scientific">Parafrankia sp. (strain EAN1pec)</name>
    <dbReference type="NCBI Taxonomy" id="298653"/>
    <lineage>
        <taxon>Bacteria</taxon>
        <taxon>Bacillati</taxon>
        <taxon>Actinomycetota</taxon>
        <taxon>Actinomycetes</taxon>
        <taxon>Frankiales</taxon>
        <taxon>Frankiaceae</taxon>
        <taxon>Parafrankia</taxon>
    </lineage>
</organism>
<feature type="chain" id="PRO_1000185888" description="Pyridoxal 5'-phosphate synthase subunit PdxT">
    <location>
        <begin position="1"/>
        <end position="203"/>
    </location>
</feature>
<feature type="active site" description="Nucleophile" evidence="1">
    <location>
        <position position="81"/>
    </location>
</feature>
<feature type="active site" description="Charge relay system" evidence="1">
    <location>
        <position position="175"/>
    </location>
</feature>
<feature type="active site" description="Charge relay system" evidence="1">
    <location>
        <position position="177"/>
    </location>
</feature>
<feature type="binding site" evidence="1">
    <location>
        <begin position="49"/>
        <end position="51"/>
    </location>
    <ligand>
        <name>L-glutamine</name>
        <dbReference type="ChEBI" id="CHEBI:58359"/>
    </ligand>
</feature>
<feature type="binding site" evidence="1">
    <location>
        <position position="110"/>
    </location>
    <ligand>
        <name>L-glutamine</name>
        <dbReference type="ChEBI" id="CHEBI:58359"/>
    </ligand>
</feature>
<feature type="binding site" evidence="1">
    <location>
        <begin position="139"/>
        <end position="140"/>
    </location>
    <ligand>
        <name>L-glutamine</name>
        <dbReference type="ChEBI" id="CHEBI:58359"/>
    </ligand>
</feature>